<feature type="signal peptide" evidence="3">
    <location>
        <begin position="1"/>
        <end position="22"/>
    </location>
</feature>
<feature type="chain" id="PRO_0000008427" description="ERO1-like protein 2">
    <location>
        <begin position="23"/>
        <end position="567"/>
    </location>
</feature>
<feature type="active site" description="Nucleophile" evidence="2">
    <location>
        <position position="389"/>
    </location>
</feature>
<feature type="active site" evidence="2">
    <location>
        <position position="392"/>
    </location>
</feature>
<feature type="binding site" evidence="2">
    <location>
        <position position="188"/>
    </location>
    <ligand>
        <name>FAD</name>
        <dbReference type="ChEBI" id="CHEBI:57692"/>
    </ligand>
</feature>
<feature type="binding site" evidence="2">
    <location>
        <position position="190"/>
    </location>
    <ligand>
        <name>FAD</name>
        <dbReference type="ChEBI" id="CHEBI:57692"/>
    </ligand>
</feature>
<feature type="binding site" evidence="2">
    <location>
        <position position="201"/>
    </location>
    <ligand>
        <name>FAD</name>
        <dbReference type="ChEBI" id="CHEBI:57692"/>
    </ligand>
</feature>
<feature type="binding site" evidence="2">
    <location>
        <position position="258"/>
    </location>
    <ligand>
        <name>FAD</name>
        <dbReference type="ChEBI" id="CHEBI:57692"/>
    </ligand>
</feature>
<feature type="binding site" evidence="2">
    <location>
        <position position="261"/>
    </location>
    <ligand>
        <name>FAD</name>
        <dbReference type="ChEBI" id="CHEBI:57692"/>
    </ligand>
</feature>
<feature type="binding site" evidence="2">
    <location>
        <position position="290"/>
    </location>
    <ligand>
        <name>FAD</name>
        <dbReference type="ChEBI" id="CHEBI:57692"/>
    </ligand>
</feature>
<feature type="glycosylation site" description="N-linked (GlcNAc...) asparagine" evidence="3">
    <location>
        <position position="49"/>
    </location>
</feature>
<feature type="glycosylation site" description="N-linked (GlcNAc...) asparagine" evidence="3">
    <location>
        <position position="546"/>
    </location>
</feature>
<feature type="disulfide bond" evidence="2">
    <location>
        <begin position="88"/>
        <end position="386"/>
    </location>
</feature>
<feature type="disulfide bond" description="Redox-active" evidence="2">
    <location>
        <begin position="98"/>
        <end position="103"/>
    </location>
</feature>
<feature type="disulfide bond" evidence="2">
    <location>
        <begin position="154"/>
        <end position="325"/>
    </location>
</feature>
<feature type="disulfide bond" description="Redox-active" evidence="2">
    <location>
        <begin position="389"/>
        <end position="392"/>
    </location>
</feature>
<proteinExistence type="evidence at protein level"/>
<sequence>MKIAKGLVGLLILYKNVCQVLCKSGSSVKSGSPWSIKNDGKSIIHDTLNSSYSDIENLNSRVSPLLFDLTEKSDYMRFYRLNLFNKECRYNLDDNVACGSSACNVLVTDEQDVPEVWSSKSLGKLEGFMPELSRQIVETDRSVMEHVDKISQSCLLERLDDEAHQYCYVDNELDSGCVYVSLLENPERFTGYSGPHSTRIWEMIYNQCLPDSSAPTIDFPALFMQGPLAPPPKPQEQLLKERMDAWTLEQRVFYRVLSGMHSSISTHLCHGYLNQRNGVWGPNLQCFQEKVLNYPERLENLYFAYALMQRAIDKLYGHLDSLTFCHDSVLQDSEVRQKIAGLVSLIHNSPKMFDETMLFAGDPSISTALKEDFREHFKTVSALMDCVGCERCRLWGKIQTNGFGTALKILFEVSNIEDEVTNFDSRSFSLRLRRSEIVALINTFDRLSRSINFVDDFKQIYSEQHKPASFKRRVLRRIKQLLFSVTPVALHPFLQKTSSILVDLYFDFKAEWDNVMLGFRYVFASYLRFPRLFKFVLFSQESPFLNWTSHHLQRYIPKNWFPEVASV</sequence>
<dbReference type="EC" id="1.8.4.-"/>
<dbReference type="EMBL" id="CU329672">
    <property type="protein sequence ID" value="CAB40181.2"/>
    <property type="molecule type" value="Genomic_DNA"/>
</dbReference>
<dbReference type="PIR" id="T40996">
    <property type="entry name" value="T40996"/>
</dbReference>
<dbReference type="RefSeq" id="NP_588313.2">
    <property type="nucleotide sequence ID" value="NM_001023303.3"/>
</dbReference>
<dbReference type="SMR" id="Q9Y7P1"/>
<dbReference type="FunCoup" id="Q9Y7P1">
    <property type="interactions" value="409"/>
</dbReference>
<dbReference type="STRING" id="284812.Q9Y7P1"/>
<dbReference type="GlyCosmos" id="Q9Y7P1">
    <property type="glycosylation" value="2 sites, No reported glycans"/>
</dbReference>
<dbReference type="iPTMnet" id="Q9Y7P1"/>
<dbReference type="PaxDb" id="4896-SPCC1450.14c.1"/>
<dbReference type="EnsemblFungi" id="SPCC1450.14c.1">
    <property type="protein sequence ID" value="SPCC1450.14c.1:pep"/>
    <property type="gene ID" value="SPCC1450.14c"/>
</dbReference>
<dbReference type="GeneID" id="2539325"/>
<dbReference type="KEGG" id="spo:2539325"/>
<dbReference type="PomBase" id="SPCC1450.14c">
    <property type="gene designation" value="ero12"/>
</dbReference>
<dbReference type="VEuPathDB" id="FungiDB:SPCC1450.14c"/>
<dbReference type="eggNOG" id="KOG2608">
    <property type="taxonomic scope" value="Eukaryota"/>
</dbReference>
<dbReference type="HOGENOM" id="CLU_023061_1_0_1"/>
<dbReference type="InParanoid" id="Q9Y7P1"/>
<dbReference type="OMA" id="CYKDRLH"/>
<dbReference type="PhylomeDB" id="Q9Y7P1"/>
<dbReference type="PRO" id="PR:Q9Y7P1"/>
<dbReference type="Proteomes" id="UP000002485">
    <property type="component" value="Chromosome III"/>
</dbReference>
<dbReference type="GO" id="GO:0005783">
    <property type="term" value="C:endoplasmic reticulum"/>
    <property type="evidence" value="ECO:0007005"/>
    <property type="project" value="PomBase"/>
</dbReference>
<dbReference type="GO" id="GO:0005789">
    <property type="term" value="C:endoplasmic reticulum membrane"/>
    <property type="evidence" value="ECO:0000314"/>
    <property type="project" value="PomBase"/>
</dbReference>
<dbReference type="GO" id="GO:0071949">
    <property type="term" value="F:FAD binding"/>
    <property type="evidence" value="ECO:0007669"/>
    <property type="project" value="InterPro"/>
</dbReference>
<dbReference type="GO" id="GO:0015035">
    <property type="term" value="F:protein-disulfide reductase activity"/>
    <property type="evidence" value="ECO:0000316"/>
    <property type="project" value="PomBase"/>
</dbReference>
<dbReference type="GO" id="GO:0016972">
    <property type="term" value="F:thiol oxidase activity"/>
    <property type="evidence" value="ECO:0000316"/>
    <property type="project" value="PomBase"/>
</dbReference>
<dbReference type="GO" id="GO:0034975">
    <property type="term" value="P:protein folding in endoplasmic reticulum"/>
    <property type="evidence" value="ECO:0000318"/>
    <property type="project" value="GO_Central"/>
</dbReference>
<dbReference type="InterPro" id="IPR007266">
    <property type="entry name" value="Ero1"/>
</dbReference>
<dbReference type="InterPro" id="IPR037192">
    <property type="entry name" value="ERO1-like_sf"/>
</dbReference>
<dbReference type="PANTHER" id="PTHR12613:SF0">
    <property type="entry name" value="ERO1-LIKE PROTEIN"/>
    <property type="match status" value="1"/>
</dbReference>
<dbReference type="PANTHER" id="PTHR12613">
    <property type="entry name" value="ERO1-RELATED"/>
    <property type="match status" value="1"/>
</dbReference>
<dbReference type="Pfam" id="PF04137">
    <property type="entry name" value="ERO1"/>
    <property type="match status" value="1"/>
</dbReference>
<dbReference type="PIRSF" id="PIRSF017205">
    <property type="entry name" value="ERO1"/>
    <property type="match status" value="1"/>
</dbReference>
<dbReference type="SUPFAM" id="SSF110019">
    <property type="entry name" value="ERO1-like"/>
    <property type="match status" value="1"/>
</dbReference>
<name>ERO12_SCHPO</name>
<gene>
    <name type="primary">ero12</name>
    <name type="ORF">SPCC1450.14c</name>
</gene>
<protein>
    <recommendedName>
        <fullName>ERO1-like protein 2</fullName>
        <ecNumber>1.8.4.-</ecNumber>
    </recommendedName>
    <alternativeName>
        <fullName>Endoplasmic reticulum oxidoreductin-1-like protein B</fullName>
    </alternativeName>
</protein>
<accession>Q9Y7P1</accession>
<keyword id="KW-1015">Disulfide bond</keyword>
<keyword id="KW-0249">Electron transport</keyword>
<keyword id="KW-0256">Endoplasmic reticulum</keyword>
<keyword id="KW-0274">FAD</keyword>
<keyword id="KW-0285">Flavoprotein</keyword>
<keyword id="KW-0325">Glycoprotein</keyword>
<keyword id="KW-0472">Membrane</keyword>
<keyword id="KW-0560">Oxidoreductase</keyword>
<keyword id="KW-0676">Redox-active center</keyword>
<keyword id="KW-1185">Reference proteome</keyword>
<keyword id="KW-0732">Signal</keyword>
<keyword id="KW-0813">Transport</keyword>
<organism>
    <name type="scientific">Schizosaccharomyces pombe (strain 972 / ATCC 24843)</name>
    <name type="common">Fission yeast</name>
    <dbReference type="NCBI Taxonomy" id="284812"/>
    <lineage>
        <taxon>Eukaryota</taxon>
        <taxon>Fungi</taxon>
        <taxon>Dikarya</taxon>
        <taxon>Ascomycota</taxon>
        <taxon>Taphrinomycotina</taxon>
        <taxon>Schizosaccharomycetes</taxon>
        <taxon>Schizosaccharomycetales</taxon>
        <taxon>Schizosaccharomycetaceae</taxon>
        <taxon>Schizosaccharomyces</taxon>
    </lineage>
</organism>
<evidence type="ECO:0000250" key="1"/>
<evidence type="ECO:0000250" key="2">
    <source>
        <dbReference type="UniProtKB" id="Q03103"/>
    </source>
</evidence>
<evidence type="ECO:0000255" key="3"/>
<evidence type="ECO:0000269" key="4">
    <source>
    </source>
</evidence>
<evidence type="ECO:0000305" key="5"/>
<comment type="function">
    <text evidence="4">Essential oxidoreductase that oxidizes proteins in the endoplasmic reticulum to produce disulfide bonds. Acts by oxidizing directly pdi1 isomerase through a direct disulfide exchange. Does not act as a direct oxidant of folding substrate, but relies on pdi1 to transfer oxidizing equivalent. Does not oxidize all pdi related proteins, suggesting that it can discriminate between pdi1 and related proteins. Its reoxidation probably involves electron transfer to molecular oxygen via FAD. Acts independently of glutathione. May be responsible for a significant proportion of reactive oxygen species (ROS) in the cell, thereby being a source of oxidative stress.</text>
</comment>
<comment type="cofactor">
    <cofactor evidence="2">
        <name>FAD</name>
        <dbReference type="ChEBI" id="CHEBI:57692"/>
    </cofactor>
</comment>
<comment type="subunit">
    <text evidence="1">May function both as a monomer and a homodimer.</text>
</comment>
<comment type="subcellular location">
    <subcellularLocation>
        <location evidence="4">Endoplasmic reticulum membrane</location>
        <topology evidence="4">Peripheral membrane protein</topology>
        <orientation evidence="4">Lumenal side</orientation>
    </subcellularLocation>
</comment>
<comment type="PTM">
    <text evidence="4">N-glycosylated.</text>
</comment>
<comment type="similarity">
    <text evidence="5">Belongs to the EROs family.</text>
</comment>
<reference key="1">
    <citation type="journal article" date="2002" name="Nature">
        <title>The genome sequence of Schizosaccharomyces pombe.</title>
        <authorList>
            <person name="Wood V."/>
            <person name="Gwilliam R."/>
            <person name="Rajandream M.A."/>
            <person name="Lyne M.H."/>
            <person name="Lyne R."/>
            <person name="Stewart A."/>
            <person name="Sgouros J.G."/>
            <person name="Peat N."/>
            <person name="Hayles J."/>
            <person name="Baker S.G."/>
            <person name="Basham D."/>
            <person name="Bowman S."/>
            <person name="Brooks K."/>
            <person name="Brown D."/>
            <person name="Brown S."/>
            <person name="Chillingworth T."/>
            <person name="Churcher C.M."/>
            <person name="Collins M."/>
            <person name="Connor R."/>
            <person name="Cronin A."/>
            <person name="Davis P."/>
            <person name="Feltwell T."/>
            <person name="Fraser A."/>
            <person name="Gentles S."/>
            <person name="Goble A."/>
            <person name="Hamlin N."/>
            <person name="Harris D.E."/>
            <person name="Hidalgo J."/>
            <person name="Hodgson G."/>
            <person name="Holroyd S."/>
            <person name="Hornsby T."/>
            <person name="Howarth S."/>
            <person name="Huckle E.J."/>
            <person name="Hunt S."/>
            <person name="Jagels K."/>
            <person name="James K.D."/>
            <person name="Jones L."/>
            <person name="Jones M."/>
            <person name="Leather S."/>
            <person name="McDonald S."/>
            <person name="McLean J."/>
            <person name="Mooney P."/>
            <person name="Moule S."/>
            <person name="Mungall K.L."/>
            <person name="Murphy L.D."/>
            <person name="Niblett D."/>
            <person name="Odell C."/>
            <person name="Oliver K."/>
            <person name="O'Neil S."/>
            <person name="Pearson D."/>
            <person name="Quail M.A."/>
            <person name="Rabbinowitsch E."/>
            <person name="Rutherford K.M."/>
            <person name="Rutter S."/>
            <person name="Saunders D."/>
            <person name="Seeger K."/>
            <person name="Sharp S."/>
            <person name="Skelton J."/>
            <person name="Simmonds M.N."/>
            <person name="Squares R."/>
            <person name="Squares S."/>
            <person name="Stevens K."/>
            <person name="Taylor K."/>
            <person name="Taylor R.G."/>
            <person name="Tivey A."/>
            <person name="Walsh S.V."/>
            <person name="Warren T."/>
            <person name="Whitehead S."/>
            <person name="Woodward J.R."/>
            <person name="Volckaert G."/>
            <person name="Aert R."/>
            <person name="Robben J."/>
            <person name="Grymonprez B."/>
            <person name="Weltjens I."/>
            <person name="Vanstreels E."/>
            <person name="Rieger M."/>
            <person name="Schaefer M."/>
            <person name="Mueller-Auer S."/>
            <person name="Gabel C."/>
            <person name="Fuchs M."/>
            <person name="Duesterhoeft A."/>
            <person name="Fritzc C."/>
            <person name="Holzer E."/>
            <person name="Moestl D."/>
            <person name="Hilbert H."/>
            <person name="Borzym K."/>
            <person name="Langer I."/>
            <person name="Beck A."/>
            <person name="Lehrach H."/>
            <person name="Reinhardt R."/>
            <person name="Pohl T.M."/>
            <person name="Eger P."/>
            <person name="Zimmermann W."/>
            <person name="Wedler H."/>
            <person name="Wambutt R."/>
            <person name="Purnelle B."/>
            <person name="Goffeau A."/>
            <person name="Cadieu E."/>
            <person name="Dreano S."/>
            <person name="Gloux S."/>
            <person name="Lelaure V."/>
            <person name="Mottier S."/>
            <person name="Galibert F."/>
            <person name="Aves S.J."/>
            <person name="Xiang Z."/>
            <person name="Hunt C."/>
            <person name="Moore K."/>
            <person name="Hurst S.M."/>
            <person name="Lucas M."/>
            <person name="Rochet M."/>
            <person name="Gaillardin C."/>
            <person name="Tallada V.A."/>
            <person name="Garzon A."/>
            <person name="Thode G."/>
            <person name="Daga R.R."/>
            <person name="Cruzado L."/>
            <person name="Jimenez J."/>
            <person name="Sanchez M."/>
            <person name="del Rey F."/>
            <person name="Benito J."/>
            <person name="Dominguez A."/>
            <person name="Revuelta J.L."/>
            <person name="Moreno S."/>
            <person name="Armstrong J."/>
            <person name="Forsburg S.L."/>
            <person name="Cerutti L."/>
            <person name="Lowe T."/>
            <person name="McCombie W.R."/>
            <person name="Paulsen I."/>
            <person name="Potashkin J."/>
            <person name="Shpakovski G.V."/>
            <person name="Ussery D."/>
            <person name="Barrell B.G."/>
            <person name="Nurse P."/>
        </authorList>
    </citation>
    <scope>NUCLEOTIDE SEQUENCE [LARGE SCALE GENOMIC DNA]</scope>
    <source>
        <strain>972 / ATCC 24843</strain>
    </source>
</reference>
<reference key="2">
    <citation type="journal article" date="2004" name="Yeast">
        <title>Schizosaccharomyces pombe ER oxidoreductin-like proteins SpEro1a p and SpEro1b p.</title>
        <authorList>
            <person name="Kettner K."/>
            <person name="Blomberg A."/>
            <person name="Roedel G."/>
        </authorList>
    </citation>
    <scope>FUNCTION</scope>
    <scope>SUBCELLULAR LOCATION</scope>
    <scope>GLYCOSYLATION</scope>
</reference>